<evidence type="ECO:0000250" key="1">
    <source>
        <dbReference type="UniProtKB" id="Q9HBT7"/>
    </source>
</evidence>
<evidence type="ECO:0000255" key="2">
    <source>
        <dbReference type="PROSITE-ProRule" id="PRU00042"/>
    </source>
</evidence>
<evidence type="ECO:0000255" key="3">
    <source>
        <dbReference type="PROSITE-ProRule" id="PRU00119"/>
    </source>
</evidence>
<evidence type="ECO:0000255" key="4">
    <source>
        <dbReference type="PROSITE-ProRule" id="PRU00187"/>
    </source>
</evidence>
<evidence type="ECO:0000256" key="5">
    <source>
        <dbReference type="SAM" id="MobiDB-lite"/>
    </source>
</evidence>
<evidence type="ECO:0000305" key="6"/>
<keyword id="KW-0238">DNA-binding</keyword>
<keyword id="KW-0479">Metal-binding</keyword>
<keyword id="KW-0539">Nucleus</keyword>
<keyword id="KW-0677">Repeat</keyword>
<keyword id="KW-0804">Transcription</keyword>
<keyword id="KW-0805">Transcription regulation</keyword>
<keyword id="KW-0862">Zinc</keyword>
<keyword id="KW-0863">Zinc-finger</keyword>
<reference key="1">
    <citation type="submission" date="2006-08" db="EMBL/GenBank/DDBJ databases">
        <title>Positive selection in transcription factor genes on the human lineage.</title>
        <authorList>
            <person name="Nickel G.C."/>
            <person name="Tefft D.L."/>
            <person name="Trevarthen K."/>
            <person name="Funt J."/>
            <person name="Adams M.D."/>
        </authorList>
    </citation>
    <scope>NUCLEOTIDE SEQUENCE [GENOMIC DNA]</scope>
</reference>
<name>ZN287_PONPY</name>
<proteinExistence type="inferred from homology"/>
<feature type="chain" id="PRO_0000285472" description="Zinc finger protein 287">
    <location>
        <begin position="1"/>
        <end position="761"/>
    </location>
</feature>
<feature type="domain" description="SCAN box" evidence="4">
    <location>
        <begin position="49"/>
        <end position="131"/>
    </location>
</feature>
<feature type="domain" description="KRAB" evidence="3">
    <location>
        <begin position="170"/>
        <end position="238"/>
    </location>
</feature>
<feature type="zinc finger region" description="C2H2-type 1" evidence="2">
    <location>
        <begin position="368"/>
        <end position="390"/>
    </location>
</feature>
<feature type="zinc finger region" description="C2H2-type 2" evidence="2">
    <location>
        <begin position="396"/>
        <end position="418"/>
    </location>
</feature>
<feature type="zinc finger region" description="C2H2-type 3" evidence="2">
    <location>
        <begin position="424"/>
        <end position="446"/>
    </location>
</feature>
<feature type="zinc finger region" description="C2H2-type 4" evidence="2">
    <location>
        <begin position="452"/>
        <end position="474"/>
    </location>
</feature>
<feature type="zinc finger region" description="C2H2-type 5" evidence="2">
    <location>
        <begin position="480"/>
        <end position="502"/>
    </location>
</feature>
<feature type="zinc finger region" description="C2H2-type 6" evidence="2">
    <location>
        <begin position="508"/>
        <end position="530"/>
    </location>
</feature>
<feature type="zinc finger region" description="C2H2-type 7" evidence="2">
    <location>
        <begin position="536"/>
        <end position="558"/>
    </location>
</feature>
<feature type="zinc finger region" description="C2H2-type 8" evidence="2">
    <location>
        <begin position="564"/>
        <end position="586"/>
    </location>
</feature>
<feature type="zinc finger region" description="C2H2-type 9" evidence="2">
    <location>
        <begin position="592"/>
        <end position="614"/>
    </location>
</feature>
<feature type="zinc finger region" description="C2H2-type 10" evidence="2">
    <location>
        <begin position="620"/>
        <end position="642"/>
    </location>
</feature>
<feature type="zinc finger region" description="C2H2-type 11" evidence="2">
    <location>
        <begin position="648"/>
        <end position="670"/>
    </location>
</feature>
<feature type="zinc finger region" description="C2H2-type 12" evidence="2">
    <location>
        <begin position="676"/>
        <end position="698"/>
    </location>
</feature>
<feature type="zinc finger region" description="C2H2-type 13" evidence="2">
    <location>
        <begin position="704"/>
        <end position="726"/>
    </location>
</feature>
<feature type="zinc finger region" description="C2H2-type 14" evidence="2">
    <location>
        <begin position="732"/>
        <end position="754"/>
    </location>
</feature>
<feature type="region of interest" description="Disordered" evidence="5">
    <location>
        <begin position="134"/>
        <end position="154"/>
    </location>
</feature>
<accession>A2T812</accession>
<comment type="function">
    <text>May be involved in transcriptional regulation.</text>
</comment>
<comment type="subcellular location">
    <subcellularLocation>
        <location evidence="6">Nucleus</location>
    </subcellularLocation>
</comment>
<comment type="similarity">
    <text evidence="6">Belongs to the krueppel C2H2-type zinc-finger protein family.</text>
</comment>
<comment type="sequence caution" evidence="6">
    <conflict type="erroneous initiation">
        <sequence resource="EMBL-CDS" id="ABM89440"/>
    </conflict>
    <text>Truncated N-terminus.</text>
</comment>
<sequence>MLASSKRMNSSSRSQILLRWKSDKAQSGPYNVEKEILTSRFLRDTETCRQNFRNFPYPDLAGPRKALSQLRELCLKWLRPEIHSKEQILELLVLEQFLTILPGEVRTWVKSQYPESSEEAVTLVEDLTQILEEEAPQNSTLSQDTPEEDPRGKHAFQTGWLNDLVTKESMTFKDVAVDITQEDWELMRPVQKELYKTVTLQNYWNMVSLGLTVYRPTVIPILEEPWMVIKEILEGPSPEWETKAQACTPVEDMSKLTKEETQTIKLEDSYDYDDRLERRATGGFWKIHTNERGFSLKSALSQEYDPTEECLSKYDIYRNNFEKHSNLIVQFDTQLDNKTSVYNEGRATFNHVSYGIVHRKILPGEKPYKCNVCGKKFRKYPSLLKHQSTHAKEKSYECEECGKEFRHISSLIAHQRMHTGEKPYECHQCGKAFSQRAHLTIHQRIHTGEKPYKCDDCGKDFSQRAHLTIHQRTHTGEKPYKCLECGKTFSHSSSLINHQRVHTGEKPYICNECGKTFSQSTHLLQHQKIHTGKKPYKCNECWKVFSQSTYLIRHQRIHSGEKCYKCNECGKAFAHSSTLIQHQTTHTGEKSYICNICGKAFSQSANLTQHHRTHTGEKPYKCSVCGKAFSQSVHLTQHQRIHNGEKPFKCNICGKAYRQGANLTQHQRIHTGEKPYKCNECGKAFIYSSSLNQHQRTHTGERPYKCNECDKDFSQRTCLIQHQRIHTGEKPYACRICGKTFTQSTNLIQHQRVHTGAKHRN</sequence>
<gene>
    <name evidence="1" type="primary">ZNF287</name>
</gene>
<dbReference type="EMBL" id="DQ977580">
    <property type="protein sequence ID" value="ABM89440.1"/>
    <property type="status" value="ALT_INIT"/>
    <property type="molecule type" value="Genomic_DNA"/>
</dbReference>
<dbReference type="RefSeq" id="XP_054313839.1">
    <property type="nucleotide sequence ID" value="XM_054457864.2"/>
</dbReference>
<dbReference type="RefSeq" id="XP_054313841.1">
    <property type="nucleotide sequence ID" value="XM_054457866.2"/>
</dbReference>
<dbReference type="RefSeq" id="XP_054313842.1">
    <property type="nucleotide sequence ID" value="XM_054457867.2"/>
</dbReference>
<dbReference type="RefSeq" id="XP_063512667.1">
    <property type="nucleotide sequence ID" value="XM_063656597.1"/>
</dbReference>
<dbReference type="RefSeq" id="XP_063512668.1">
    <property type="nucleotide sequence ID" value="XM_063656598.1"/>
</dbReference>
<dbReference type="RefSeq" id="XP_063512669.1">
    <property type="nucleotide sequence ID" value="XM_063656599.1"/>
</dbReference>
<dbReference type="SMR" id="A2T812"/>
<dbReference type="GeneID" id="129017365"/>
<dbReference type="GO" id="GO:0005634">
    <property type="term" value="C:nucleus"/>
    <property type="evidence" value="ECO:0007669"/>
    <property type="project" value="UniProtKB-SubCell"/>
</dbReference>
<dbReference type="GO" id="GO:0003677">
    <property type="term" value="F:DNA binding"/>
    <property type="evidence" value="ECO:0007669"/>
    <property type="project" value="UniProtKB-KW"/>
</dbReference>
<dbReference type="GO" id="GO:0008270">
    <property type="term" value="F:zinc ion binding"/>
    <property type="evidence" value="ECO:0007669"/>
    <property type="project" value="UniProtKB-KW"/>
</dbReference>
<dbReference type="GO" id="GO:0006355">
    <property type="term" value="P:regulation of DNA-templated transcription"/>
    <property type="evidence" value="ECO:0007669"/>
    <property type="project" value="InterPro"/>
</dbReference>
<dbReference type="CDD" id="cd07765">
    <property type="entry name" value="KRAB_A-box"/>
    <property type="match status" value="1"/>
</dbReference>
<dbReference type="CDD" id="cd07936">
    <property type="entry name" value="SCAN"/>
    <property type="match status" value="1"/>
</dbReference>
<dbReference type="FunFam" id="3.30.160.60:FF:000295">
    <property type="entry name" value="zinc finger protein 19"/>
    <property type="match status" value="2"/>
</dbReference>
<dbReference type="FunFam" id="1.10.4020.10:FF:000001">
    <property type="entry name" value="zinc finger protein 263 isoform X1"/>
    <property type="match status" value="1"/>
</dbReference>
<dbReference type="FunFam" id="3.30.160.60:FF:000252">
    <property type="entry name" value="Zinc finger protein 287"/>
    <property type="match status" value="2"/>
</dbReference>
<dbReference type="FunFam" id="3.30.160.60:FF:000269">
    <property type="entry name" value="Zinc finger protein 287"/>
    <property type="match status" value="2"/>
</dbReference>
<dbReference type="FunFam" id="3.30.160.60:FF:000479">
    <property type="entry name" value="Zinc finger protein 287"/>
    <property type="match status" value="2"/>
</dbReference>
<dbReference type="FunFam" id="3.30.160.60:FF:002029">
    <property type="entry name" value="Zinc finger protein 287"/>
    <property type="match status" value="1"/>
</dbReference>
<dbReference type="FunFam" id="3.30.160.60:FF:001178">
    <property type="entry name" value="zinc finger protein 287"/>
    <property type="match status" value="1"/>
</dbReference>
<dbReference type="FunFam" id="3.30.160.60:FF:002343">
    <property type="entry name" value="Zinc finger protein 33A"/>
    <property type="match status" value="1"/>
</dbReference>
<dbReference type="FunFam" id="3.30.160.60:FF:000016">
    <property type="entry name" value="zinc finger protein 37 homolog"/>
    <property type="match status" value="1"/>
</dbReference>
<dbReference type="FunFam" id="3.30.160.60:FF:001498">
    <property type="entry name" value="Zinc finger protein 404"/>
    <property type="match status" value="1"/>
</dbReference>
<dbReference type="FunFam" id="3.30.160.60:FF:002090">
    <property type="entry name" value="Zinc finger protein 473"/>
    <property type="match status" value="1"/>
</dbReference>
<dbReference type="Gene3D" id="6.10.140.140">
    <property type="match status" value="1"/>
</dbReference>
<dbReference type="Gene3D" id="3.30.160.60">
    <property type="entry name" value="Classic Zinc Finger"/>
    <property type="match status" value="14"/>
</dbReference>
<dbReference type="Gene3D" id="1.10.4020.10">
    <property type="entry name" value="DNA breaking-rejoining enzymes"/>
    <property type="match status" value="1"/>
</dbReference>
<dbReference type="InterPro" id="IPR001909">
    <property type="entry name" value="KRAB"/>
</dbReference>
<dbReference type="InterPro" id="IPR036051">
    <property type="entry name" value="KRAB_dom_sf"/>
</dbReference>
<dbReference type="InterPro" id="IPR003309">
    <property type="entry name" value="SCAN_dom"/>
</dbReference>
<dbReference type="InterPro" id="IPR038269">
    <property type="entry name" value="SCAN_sf"/>
</dbReference>
<dbReference type="InterPro" id="IPR050758">
    <property type="entry name" value="Znf_C2H2-type"/>
</dbReference>
<dbReference type="InterPro" id="IPR036236">
    <property type="entry name" value="Znf_C2H2_sf"/>
</dbReference>
<dbReference type="InterPro" id="IPR013087">
    <property type="entry name" value="Znf_C2H2_type"/>
</dbReference>
<dbReference type="PANTHER" id="PTHR23234:SF8">
    <property type="entry name" value="C2H2-TYPE DOMAIN-CONTAINING PROTEIN"/>
    <property type="match status" value="1"/>
</dbReference>
<dbReference type="PANTHER" id="PTHR23234">
    <property type="entry name" value="ZNF44 PROTEIN"/>
    <property type="match status" value="1"/>
</dbReference>
<dbReference type="Pfam" id="PF01352">
    <property type="entry name" value="KRAB"/>
    <property type="match status" value="1"/>
</dbReference>
<dbReference type="Pfam" id="PF02023">
    <property type="entry name" value="SCAN"/>
    <property type="match status" value="1"/>
</dbReference>
<dbReference type="Pfam" id="PF00096">
    <property type="entry name" value="zf-C2H2"/>
    <property type="match status" value="14"/>
</dbReference>
<dbReference type="SMART" id="SM00349">
    <property type="entry name" value="KRAB"/>
    <property type="match status" value="1"/>
</dbReference>
<dbReference type="SMART" id="SM00431">
    <property type="entry name" value="SCAN"/>
    <property type="match status" value="1"/>
</dbReference>
<dbReference type="SMART" id="SM00355">
    <property type="entry name" value="ZnF_C2H2"/>
    <property type="match status" value="14"/>
</dbReference>
<dbReference type="SUPFAM" id="SSF57667">
    <property type="entry name" value="beta-beta-alpha zinc fingers"/>
    <property type="match status" value="8"/>
</dbReference>
<dbReference type="SUPFAM" id="SSF109640">
    <property type="entry name" value="KRAB domain (Kruppel-associated box)"/>
    <property type="match status" value="1"/>
</dbReference>
<dbReference type="SUPFAM" id="SSF47353">
    <property type="entry name" value="Retrovirus capsid dimerization domain-like"/>
    <property type="match status" value="1"/>
</dbReference>
<dbReference type="PROSITE" id="PS50805">
    <property type="entry name" value="KRAB"/>
    <property type="match status" value="1"/>
</dbReference>
<dbReference type="PROSITE" id="PS50804">
    <property type="entry name" value="SCAN_BOX"/>
    <property type="match status" value="1"/>
</dbReference>
<dbReference type="PROSITE" id="PS00028">
    <property type="entry name" value="ZINC_FINGER_C2H2_1"/>
    <property type="match status" value="14"/>
</dbReference>
<dbReference type="PROSITE" id="PS50157">
    <property type="entry name" value="ZINC_FINGER_C2H2_2"/>
    <property type="match status" value="14"/>
</dbReference>
<organism>
    <name type="scientific">Pongo pygmaeus</name>
    <name type="common">Bornean orangutan</name>
    <dbReference type="NCBI Taxonomy" id="9600"/>
    <lineage>
        <taxon>Eukaryota</taxon>
        <taxon>Metazoa</taxon>
        <taxon>Chordata</taxon>
        <taxon>Craniata</taxon>
        <taxon>Vertebrata</taxon>
        <taxon>Euteleostomi</taxon>
        <taxon>Mammalia</taxon>
        <taxon>Eutheria</taxon>
        <taxon>Euarchontoglires</taxon>
        <taxon>Primates</taxon>
        <taxon>Haplorrhini</taxon>
        <taxon>Catarrhini</taxon>
        <taxon>Hominidae</taxon>
        <taxon>Pongo</taxon>
    </lineage>
</organism>
<protein>
    <recommendedName>
        <fullName evidence="1">Zinc finger protein 287</fullName>
    </recommendedName>
</protein>